<name>FLUC_BORPE</name>
<evidence type="ECO:0000255" key="1">
    <source>
        <dbReference type="HAMAP-Rule" id="MF_00454"/>
    </source>
</evidence>
<evidence type="ECO:0000269" key="2">
    <source>
    </source>
</evidence>
<evidence type="ECO:0000269" key="3">
    <source>
    </source>
</evidence>
<evidence type="ECO:0000269" key="4">
    <source>
    </source>
</evidence>
<evidence type="ECO:0000269" key="5">
    <source>
    </source>
</evidence>
<evidence type="ECO:0000303" key="6">
    <source>
    </source>
</evidence>
<evidence type="ECO:0000305" key="7">
    <source>
    </source>
</evidence>
<evidence type="ECO:0000305" key="8">
    <source>
    </source>
</evidence>
<evidence type="ECO:0000305" key="9">
    <source>
    </source>
</evidence>
<evidence type="ECO:0007744" key="10">
    <source>
        <dbReference type="PDB" id="5A40"/>
    </source>
</evidence>
<evidence type="ECO:0007744" key="11">
    <source>
        <dbReference type="PDB" id="5NKQ"/>
    </source>
</evidence>
<evidence type="ECO:0007744" key="12">
    <source>
        <dbReference type="PDB" id="6BQO"/>
    </source>
</evidence>
<evidence type="ECO:0007829" key="13">
    <source>
        <dbReference type="PDB" id="5NKQ"/>
    </source>
</evidence>
<keyword id="KW-0002">3D-structure</keyword>
<keyword id="KW-0997">Cell inner membrane</keyword>
<keyword id="KW-1003">Cell membrane</keyword>
<keyword id="KW-0407">Ion channel</keyword>
<keyword id="KW-0406">Ion transport</keyword>
<keyword id="KW-0472">Membrane</keyword>
<keyword id="KW-0479">Metal-binding</keyword>
<keyword id="KW-1185">Reference proteome</keyword>
<keyword id="KW-0915">Sodium</keyword>
<keyword id="KW-0812">Transmembrane</keyword>
<keyword id="KW-1133">Transmembrane helix</keyword>
<keyword id="KW-0813">Transport</keyword>
<protein>
    <recommendedName>
        <fullName evidence="1 6">Fluoride-specific ion channel FluC</fullName>
    </recommendedName>
</protein>
<comment type="function">
    <text evidence="1 2 3">Fluoride-specific ion channel (PubMed:23991286, PubMed:26344196). Important for reducing fluoride concentration in the cell, thus reducing its toxicity (By similarity). Is highly specific for fluoride ions and cannot transport chloride ions (PubMed:23991286).</text>
</comment>
<comment type="catalytic activity">
    <reaction evidence="1 2 3">
        <text>fluoride(in) = fluoride(out)</text>
        <dbReference type="Rhea" id="RHEA:76159"/>
        <dbReference type="ChEBI" id="CHEBI:17051"/>
    </reaction>
    <physiologicalReaction direction="left-to-right" evidence="1 7 8">
        <dbReference type="Rhea" id="RHEA:76160"/>
    </physiologicalReaction>
</comment>
<comment type="activity regulation">
    <text evidence="5">Na(+) is not transported, but it plays an essential structural role and its presence is essential for fluoride channel function (PubMed:31945374). The Na(+)-binding site is specific for Na(+) over most other cations including K(+) and Mg(2+) (PubMed:31945374). Fluoride efflux is inhibited by Li(2+) (PubMed:31945374).</text>
</comment>
<comment type="subunit">
    <text evidence="2 3 4">Homodimer.</text>
</comment>
<comment type="subcellular location">
    <subcellularLocation>
        <location evidence="1">Cell inner membrane</location>
        <topology evidence="1 2 3 4">Multi-pass membrane protein</topology>
    </subcellularLocation>
    <text evidence="2 3 4">Exhibits a dual-topology architecture: the two subunits are oriented antiparallel to each other within the membrane.</text>
</comment>
<comment type="domain">
    <text evidence="3 5">Shows a double-barrelled channel architecture in which two fluoride ion pathways span the membrane, and the dual-topology arrangement includes a centrally coordinated Na(+) cation.</text>
</comment>
<comment type="miscellaneous">
    <text evidence="2">Renamed the Fluc family to avoid confusion with the CLC-type F(-)/H(+) antiporters.</text>
</comment>
<comment type="similarity">
    <text evidence="1 9">Belongs to the fluoride channel Fluc/FEX (TC 1.A.43) family.</text>
</comment>
<feature type="chain" id="PRO_0000110064" description="Fluoride-specific ion channel FluC">
    <location>
        <begin position="1"/>
        <end position="128"/>
    </location>
</feature>
<feature type="transmembrane region" description="Helical" evidence="3 10 11">
    <location>
        <begin position="7"/>
        <end position="29"/>
    </location>
</feature>
<feature type="transmembrane region" description="Helical" evidence="3 10 11">
    <location>
        <begin position="36"/>
        <end position="57"/>
    </location>
</feature>
<feature type="transmembrane region" description="Helical" evidence="3 10 11">
    <location>
        <begin position="65"/>
        <end position="94"/>
    </location>
</feature>
<feature type="transmembrane region" description="Helical" evidence="3 10 11">
    <location>
        <begin position="98"/>
        <end position="126"/>
    </location>
</feature>
<feature type="binding site" evidence="3 11">
    <location>
        <position position="43"/>
    </location>
    <ligand>
        <name>fluoride</name>
        <dbReference type="ChEBI" id="CHEBI:17051"/>
        <label>1</label>
    </ligand>
</feature>
<feature type="binding site" evidence="3 11">
    <location>
        <position position="43"/>
    </location>
    <ligand>
        <name>fluoride</name>
        <dbReference type="ChEBI" id="CHEBI:17051"/>
        <label>2</label>
    </ligand>
</feature>
<feature type="binding site" evidence="1 3 11">
    <location>
        <position position="77"/>
    </location>
    <ligand>
        <name>Na(+)</name>
        <dbReference type="ChEBI" id="CHEBI:29101"/>
        <note>structural</note>
    </ligand>
</feature>
<feature type="binding site" evidence="1 3 11">
    <location>
        <position position="80"/>
    </location>
    <ligand>
        <name>Na(+)</name>
        <dbReference type="ChEBI" id="CHEBI:29101"/>
        <note>structural</note>
    </ligand>
</feature>
<feature type="binding site" evidence="3 11">
    <location>
        <position position="104"/>
    </location>
    <ligand>
        <name>fluoride</name>
        <dbReference type="ChEBI" id="CHEBI:17051"/>
        <label>2</label>
    </ligand>
</feature>
<feature type="binding site" evidence="3 11">
    <location>
        <position position="108"/>
    </location>
    <ligand>
        <name>fluoride</name>
        <dbReference type="ChEBI" id="CHEBI:17051"/>
        <label>2</label>
    </ligand>
</feature>
<feature type="binding site" evidence="3 11">
    <location>
        <position position="112"/>
    </location>
    <ligand>
        <name>fluoride</name>
        <dbReference type="ChEBI" id="CHEBI:17051"/>
        <label>1</label>
    </ligand>
</feature>
<feature type="mutagenesis site" description="Supports robust fluoride-selective efflux at pH 7. Efflux falls when increasing pH and is extinguished at pH 9." evidence="3">
    <original>N</original>
    <variation>D</variation>
    <location>
        <position position="43"/>
    </location>
</feature>
<feature type="mutagenesis site" description="Fluoride efflux is 3 orders of magnitude slower than for wild-type." evidence="3">
    <original>F</original>
    <variation>I</variation>
    <location>
        <position position="82"/>
    </location>
</feature>
<feature type="mutagenesis site" description="Fluoride efflux is 2 orders of magnitude slower than for wild-type." evidence="3">
    <original>F</original>
    <variation>I</variation>
    <location>
        <position position="85"/>
    </location>
</feature>
<feature type="helix" evidence="13">
    <location>
        <begin position="6"/>
        <end position="30"/>
    </location>
</feature>
<feature type="strand" evidence="13">
    <location>
        <begin position="33"/>
        <end position="36"/>
    </location>
</feature>
<feature type="helix" evidence="13">
    <location>
        <begin position="37"/>
        <end position="59"/>
    </location>
</feature>
<feature type="helix" evidence="13">
    <location>
        <begin position="65"/>
        <end position="71"/>
    </location>
</feature>
<feature type="turn" evidence="13">
    <location>
        <begin position="72"/>
        <end position="74"/>
    </location>
</feature>
<feature type="helix" evidence="13">
    <location>
        <begin position="75"/>
        <end position="79"/>
    </location>
</feature>
<feature type="helix" evidence="13">
    <location>
        <begin position="83"/>
        <end position="95"/>
    </location>
</feature>
<feature type="helix" evidence="13">
    <location>
        <begin position="98"/>
        <end position="126"/>
    </location>
</feature>
<proteinExistence type="evidence at protein level"/>
<reference key="1">
    <citation type="journal article" date="2003" name="Nat. Genet.">
        <title>Comparative analysis of the genome sequences of Bordetella pertussis, Bordetella parapertussis and Bordetella bronchiseptica.</title>
        <authorList>
            <person name="Parkhill J."/>
            <person name="Sebaihia M."/>
            <person name="Preston A."/>
            <person name="Murphy L.D."/>
            <person name="Thomson N.R."/>
            <person name="Harris D.E."/>
            <person name="Holden M.T.G."/>
            <person name="Churcher C.M."/>
            <person name="Bentley S.D."/>
            <person name="Mungall K.L."/>
            <person name="Cerdeno-Tarraga A.-M."/>
            <person name="Temple L."/>
            <person name="James K.D."/>
            <person name="Harris B."/>
            <person name="Quail M.A."/>
            <person name="Achtman M."/>
            <person name="Atkin R."/>
            <person name="Baker S."/>
            <person name="Basham D."/>
            <person name="Bason N."/>
            <person name="Cherevach I."/>
            <person name="Chillingworth T."/>
            <person name="Collins M."/>
            <person name="Cronin A."/>
            <person name="Davis P."/>
            <person name="Doggett J."/>
            <person name="Feltwell T."/>
            <person name="Goble A."/>
            <person name="Hamlin N."/>
            <person name="Hauser H."/>
            <person name="Holroyd S."/>
            <person name="Jagels K."/>
            <person name="Leather S."/>
            <person name="Moule S."/>
            <person name="Norberczak H."/>
            <person name="O'Neil S."/>
            <person name="Ormond D."/>
            <person name="Price C."/>
            <person name="Rabbinowitsch E."/>
            <person name="Rutter S."/>
            <person name="Sanders M."/>
            <person name="Saunders D."/>
            <person name="Seeger K."/>
            <person name="Sharp S."/>
            <person name="Simmonds M."/>
            <person name="Skelton J."/>
            <person name="Squares R."/>
            <person name="Squares S."/>
            <person name="Stevens K."/>
            <person name="Unwin L."/>
            <person name="Whitehead S."/>
            <person name="Barrell B.G."/>
            <person name="Maskell D.J."/>
        </authorList>
    </citation>
    <scope>NUCLEOTIDE SEQUENCE [LARGE SCALE GENOMIC DNA]</scope>
    <source>
        <strain>Tohama I / ATCC BAA-589 / NCTC 13251</strain>
    </source>
</reference>
<reference key="2">
    <citation type="journal article" date="2013" name="Elife">
        <title>A family of fluoride-specific ion channels with dual-topology architecture.</title>
        <authorList>
            <person name="Stockbridge R.B."/>
            <person name="Robertson J.L."/>
            <person name="Kolmakova-Partensky L."/>
            <person name="Miller C."/>
        </authorList>
    </citation>
    <scope>FUNCTION</scope>
    <scope>TRANSPORTER ACTIVITY</scope>
    <scope>SUBUNIT</scope>
    <scope>SUBCELLULAR LOCATION</scope>
    <scope>NOMENCLATURE</scope>
</reference>
<reference key="3">
    <citation type="journal article" date="2020" name="J. Mol. Biol.">
        <title>An interfacial sodium ion is an essential structural feature of Fluc family fluoride channels.</title>
        <authorList>
            <person name="McIlwain B.C."/>
            <person name="Martin K."/>
            <person name="Hayter E.A."/>
            <person name="Stockbridge R.B."/>
        </authorList>
    </citation>
    <scope>ACTIVITY REGULATION</scope>
    <scope>DOMAIN</scope>
</reference>
<reference key="4">
    <citation type="journal article" date="2021" name="Annu. Rev. Biochem.">
        <title>Membrane Exporters of Fluoride Ion.</title>
        <authorList>
            <person name="McIlwain B.C."/>
            <person name="Ruprecht M.T."/>
            <person name="Stockbridge R.B."/>
        </authorList>
    </citation>
    <scope>REVIEW</scope>
    <scope>NOMENCLATURE</scope>
</reference>
<reference evidence="10 11" key="5">
    <citation type="journal article" date="2015" name="Nature">
        <title>Crystal structures of a double-barrelled fluoride ion channel.</title>
        <authorList>
            <person name="Stockbridge R.B."/>
            <person name="Kolmakova-Partensky L."/>
            <person name="Shane T."/>
            <person name="Koide A."/>
            <person name="Koide S."/>
            <person name="Miller C."/>
            <person name="Newstead S."/>
        </authorList>
    </citation>
    <scope>X-RAY CRYSTALLOGRAPHY (2.17 ANGSTROMS) IN COMPLEX WITH FLUORIDE; SODIUM AND MONOBODY INHIBITORS</scope>
    <scope>FUNCTION</scope>
    <scope>TRANSPORTER ACTIVITY</scope>
    <scope>SUBUNIT</scope>
    <scope>SUBCELLULAR LOCATION</scope>
    <scope>TOPOLOGY</scope>
    <scope>DOMAIN</scope>
    <scope>MUTAGENESIS OF ASN-43; PHE-82 AND PHE-85</scope>
</reference>
<reference evidence="12" key="6">
    <citation type="journal article" date="2018" name="Structure">
        <title>Cork-in-Bottle Occlusion of Fluoride Ion Channels by Crystallization Chaperones.</title>
        <authorList>
            <person name="McIlwain B.C."/>
            <person name="Newstead S."/>
            <person name="Stockbridge R.B."/>
        </authorList>
    </citation>
    <scope>X-RAY CRYSTALLOGRAPHY (2.80 ANGSTROMS)</scope>
    <scope>SUBCELLULAR LOCATION</scope>
    <scope>TOPOLOGY</scope>
    <scope>SUBUNIT</scope>
</reference>
<sequence length="128" mass="13339">MLTYAPLNFIAIGIGATLGAWLRWVLGLRLNGAGWPWGTLTANLVGGYLIGVMVALIASHPEWPAWIRLAAVTGFLGGLTTFSTFSAETVDMLERGVYATAAAYAGASLAGSLAMTGLGLATVRLLLR</sequence>
<accession>Q7VYU0</accession>
<organism>
    <name type="scientific">Bordetella pertussis (strain Tohama I / ATCC BAA-589 / NCTC 13251)</name>
    <dbReference type="NCBI Taxonomy" id="257313"/>
    <lineage>
        <taxon>Bacteria</taxon>
        <taxon>Pseudomonadati</taxon>
        <taxon>Pseudomonadota</taxon>
        <taxon>Betaproteobacteria</taxon>
        <taxon>Burkholderiales</taxon>
        <taxon>Alcaligenaceae</taxon>
        <taxon>Bordetella</taxon>
    </lineage>
</organism>
<dbReference type="EMBL" id="BX640414">
    <property type="protein sequence ID" value="CAE41513.1"/>
    <property type="molecule type" value="Genomic_DNA"/>
</dbReference>
<dbReference type="RefSeq" id="NP_879990.1">
    <property type="nucleotide sequence ID" value="NC_002929.2"/>
</dbReference>
<dbReference type="RefSeq" id="WP_003818609.1">
    <property type="nucleotide sequence ID" value="NZ_CP039022.1"/>
</dbReference>
<dbReference type="PDB" id="5A40">
    <property type="method" value="X-ray"/>
    <property type="resolution" value="3.60 A"/>
    <property type="chains" value="A/B/C/D=1-128"/>
</dbReference>
<dbReference type="PDB" id="5NKQ">
    <property type="method" value="X-ray"/>
    <property type="resolution" value="2.17 A"/>
    <property type="chains" value="A/B/C/D=1-128"/>
</dbReference>
<dbReference type="PDB" id="6BQO">
    <property type="method" value="X-ray"/>
    <property type="resolution" value="2.80 A"/>
    <property type="chains" value="A/B=1-128"/>
</dbReference>
<dbReference type="PDBsum" id="5A40"/>
<dbReference type="PDBsum" id="5NKQ"/>
<dbReference type="PDBsum" id="6BQO"/>
<dbReference type="SMR" id="Q7VYU0"/>
<dbReference type="DIP" id="DIP-61785N"/>
<dbReference type="STRING" id="257313.BP1217"/>
<dbReference type="TCDB" id="1.A.43.1.17">
    <property type="family name" value="the camphor resistance or fluoride exporter (fluc) family"/>
</dbReference>
<dbReference type="PaxDb" id="257313-BP1217"/>
<dbReference type="ABCD" id="Q7VYU0">
    <property type="antibodies" value="4 sequenced antibodies"/>
</dbReference>
<dbReference type="GeneID" id="69601131"/>
<dbReference type="KEGG" id="bpe:BP1217"/>
<dbReference type="PATRIC" id="fig|257313.5.peg.1311"/>
<dbReference type="eggNOG" id="COG0239">
    <property type="taxonomic scope" value="Bacteria"/>
</dbReference>
<dbReference type="HOGENOM" id="CLU_114342_3_3_4"/>
<dbReference type="EvolutionaryTrace" id="Q7VYU0"/>
<dbReference type="Proteomes" id="UP000002676">
    <property type="component" value="Chromosome"/>
</dbReference>
<dbReference type="GO" id="GO:0005886">
    <property type="term" value="C:plasma membrane"/>
    <property type="evidence" value="ECO:0007669"/>
    <property type="project" value="UniProtKB-SubCell"/>
</dbReference>
<dbReference type="GO" id="GO:0062054">
    <property type="term" value="F:fluoride channel activity"/>
    <property type="evidence" value="ECO:0007669"/>
    <property type="project" value="UniProtKB-UniRule"/>
</dbReference>
<dbReference type="GO" id="GO:0046872">
    <property type="term" value="F:metal ion binding"/>
    <property type="evidence" value="ECO:0007669"/>
    <property type="project" value="UniProtKB-KW"/>
</dbReference>
<dbReference type="GO" id="GO:0140114">
    <property type="term" value="P:cellular detoxification of fluoride"/>
    <property type="evidence" value="ECO:0007669"/>
    <property type="project" value="UniProtKB-UniRule"/>
</dbReference>
<dbReference type="HAMAP" id="MF_00454">
    <property type="entry name" value="FluC"/>
    <property type="match status" value="1"/>
</dbReference>
<dbReference type="InterPro" id="IPR003691">
    <property type="entry name" value="FluC"/>
</dbReference>
<dbReference type="NCBIfam" id="TIGR00494">
    <property type="entry name" value="crcB"/>
    <property type="match status" value="1"/>
</dbReference>
<dbReference type="NCBIfam" id="NF010792">
    <property type="entry name" value="PRK14196.1"/>
    <property type="match status" value="1"/>
</dbReference>
<dbReference type="PANTHER" id="PTHR28259">
    <property type="entry name" value="FLUORIDE EXPORT PROTEIN 1-RELATED"/>
    <property type="match status" value="1"/>
</dbReference>
<dbReference type="PANTHER" id="PTHR28259:SF1">
    <property type="entry name" value="FLUORIDE EXPORT PROTEIN 1-RELATED"/>
    <property type="match status" value="1"/>
</dbReference>
<dbReference type="Pfam" id="PF02537">
    <property type="entry name" value="CRCB"/>
    <property type="match status" value="1"/>
</dbReference>
<gene>
    <name evidence="1 6" type="primary">fluC</name>
    <name evidence="1 6" type="synonym">crcB</name>
    <name type="ordered locus">BP1217</name>
</gene>